<accession>Q6HEY7</accession>
<reference key="1">
    <citation type="journal article" date="2006" name="J. Bacteriol.">
        <title>Pathogenomic sequence analysis of Bacillus cereus and Bacillus thuringiensis isolates closely related to Bacillus anthracis.</title>
        <authorList>
            <person name="Han C.S."/>
            <person name="Xie G."/>
            <person name="Challacombe J.F."/>
            <person name="Altherr M.R."/>
            <person name="Bhotika S.S."/>
            <person name="Bruce D."/>
            <person name="Campbell C.S."/>
            <person name="Campbell M.L."/>
            <person name="Chen J."/>
            <person name="Chertkov O."/>
            <person name="Cleland C."/>
            <person name="Dimitrijevic M."/>
            <person name="Doggett N.A."/>
            <person name="Fawcett J.J."/>
            <person name="Glavina T."/>
            <person name="Goodwin L.A."/>
            <person name="Hill K.K."/>
            <person name="Hitchcock P."/>
            <person name="Jackson P.J."/>
            <person name="Keim P."/>
            <person name="Kewalramani A.R."/>
            <person name="Longmire J."/>
            <person name="Lucas S."/>
            <person name="Malfatti S."/>
            <person name="McMurry K."/>
            <person name="Meincke L.J."/>
            <person name="Misra M."/>
            <person name="Moseman B.L."/>
            <person name="Mundt M."/>
            <person name="Munk A.C."/>
            <person name="Okinaka R.T."/>
            <person name="Parson-Quintana B."/>
            <person name="Reilly L.P."/>
            <person name="Richardson P."/>
            <person name="Robinson D.L."/>
            <person name="Rubin E."/>
            <person name="Saunders E."/>
            <person name="Tapia R."/>
            <person name="Tesmer J.G."/>
            <person name="Thayer N."/>
            <person name="Thompson L.S."/>
            <person name="Tice H."/>
            <person name="Ticknor L.O."/>
            <person name="Wills P.L."/>
            <person name="Brettin T.S."/>
            <person name="Gilna P."/>
        </authorList>
    </citation>
    <scope>NUCLEOTIDE SEQUENCE [LARGE SCALE GENOMIC DNA]</scope>
    <source>
        <strain>97-27</strain>
    </source>
</reference>
<keyword id="KW-0963">Cytoplasm</keyword>
<keyword id="KW-0238">DNA-binding</keyword>
<keyword id="KW-0597">Phosphoprotein</keyword>
<keyword id="KW-0678">Repressor</keyword>
<keyword id="KW-0804">Transcription</keyword>
<keyword id="KW-0805">Transcription regulation</keyword>
<comment type="function">
    <text evidence="1">DNA-binding global transcriptional regulator which is involved in the adaptive response to starvation and acts by directly or indirectly controlling the expression of numerous genes in response to nutrient availability. During rapid exponential growth, CodY is highly active and represses genes whose products allow adaptation to nutrient depletion.</text>
</comment>
<comment type="subcellular location">
    <subcellularLocation>
        <location evidence="1">Cytoplasm</location>
    </subcellularLocation>
</comment>
<comment type="similarity">
    <text evidence="1">Belongs to the CodY family.</text>
</comment>
<sequence length="259" mass="28774">MELLAKTRKLNALLQSAAGKPVNFREMSDTMCEVIEANVFVVSRRGKLLGYAIHQQIENERMKQMLAERQFPEEYTQSLFNITETSSNLDVNSAYTAFPVENKELFGQGLTTIVPIVGGGERLGTLVLARLGQEFLDDDLILAEYSSTVVGMEILREKAEEIEEEARSKAVVQMAISSLSYSELEAIEHIFEELNGTEGLLVASKIADRVGITRSVIVNALRKLESAGVIESRSLGMKGTYIKVLNDKFLHELAKLKTN</sequence>
<organism>
    <name type="scientific">Bacillus thuringiensis subsp. konkukian (strain 97-27)</name>
    <dbReference type="NCBI Taxonomy" id="281309"/>
    <lineage>
        <taxon>Bacteria</taxon>
        <taxon>Bacillati</taxon>
        <taxon>Bacillota</taxon>
        <taxon>Bacilli</taxon>
        <taxon>Bacillales</taxon>
        <taxon>Bacillaceae</taxon>
        <taxon>Bacillus</taxon>
        <taxon>Bacillus cereus group</taxon>
    </lineage>
</organism>
<feature type="chain" id="PRO_0000213218" description="Global transcriptional regulator CodY">
    <location>
        <begin position="1"/>
        <end position="259"/>
    </location>
</feature>
<feature type="DNA-binding region" description="H-T-H motif" evidence="1">
    <location>
        <begin position="203"/>
        <end position="222"/>
    </location>
</feature>
<feature type="region of interest" description="GAF domain" evidence="1">
    <location>
        <begin position="1"/>
        <end position="155"/>
    </location>
</feature>
<feature type="modified residue" description="Phosphoserine" evidence="1">
    <location>
        <position position="215"/>
    </location>
</feature>
<evidence type="ECO:0000255" key="1">
    <source>
        <dbReference type="HAMAP-Rule" id="MF_00621"/>
    </source>
</evidence>
<proteinExistence type="inferred from homology"/>
<protein>
    <recommendedName>
        <fullName evidence="1">Global transcriptional regulator CodY</fullName>
    </recommendedName>
</protein>
<name>CODY_BACHK</name>
<gene>
    <name evidence="1" type="primary">codY</name>
    <name type="ordered locus">BT9727_3569</name>
</gene>
<dbReference type="EMBL" id="AE017355">
    <property type="protein sequence ID" value="AAT60602.1"/>
    <property type="molecule type" value="Genomic_DNA"/>
</dbReference>
<dbReference type="RefSeq" id="WP_000421288.1">
    <property type="nucleotide sequence ID" value="NC_005957.1"/>
</dbReference>
<dbReference type="RefSeq" id="YP_037889.1">
    <property type="nucleotide sequence ID" value="NC_005957.1"/>
</dbReference>
<dbReference type="SMR" id="Q6HEY7"/>
<dbReference type="GeneID" id="83637535"/>
<dbReference type="KEGG" id="btk:BT9727_3569"/>
<dbReference type="PATRIC" id="fig|281309.8.peg.3807"/>
<dbReference type="HOGENOM" id="CLU_089581_0_0_9"/>
<dbReference type="Proteomes" id="UP000001301">
    <property type="component" value="Chromosome"/>
</dbReference>
<dbReference type="GO" id="GO:0005737">
    <property type="term" value="C:cytoplasm"/>
    <property type="evidence" value="ECO:0007669"/>
    <property type="project" value="UniProtKB-SubCell"/>
</dbReference>
<dbReference type="GO" id="GO:0003677">
    <property type="term" value="F:DNA binding"/>
    <property type="evidence" value="ECO:0007669"/>
    <property type="project" value="UniProtKB-UniRule"/>
</dbReference>
<dbReference type="GO" id="GO:0003700">
    <property type="term" value="F:DNA-binding transcription factor activity"/>
    <property type="evidence" value="ECO:0007669"/>
    <property type="project" value="InterPro"/>
</dbReference>
<dbReference type="GO" id="GO:0005525">
    <property type="term" value="F:GTP binding"/>
    <property type="evidence" value="ECO:0007669"/>
    <property type="project" value="InterPro"/>
</dbReference>
<dbReference type="GO" id="GO:0045892">
    <property type="term" value="P:negative regulation of DNA-templated transcription"/>
    <property type="evidence" value="ECO:0007669"/>
    <property type="project" value="UniProtKB-UniRule"/>
</dbReference>
<dbReference type="FunFam" id="1.10.10.10:FF:000034">
    <property type="entry name" value="GTP-sensing transcriptional pleiotropic repressor CodY"/>
    <property type="match status" value="1"/>
</dbReference>
<dbReference type="FunFam" id="3.30.450.40:FF:000003">
    <property type="entry name" value="GTP-sensing transcriptional pleiotropic repressor CodY"/>
    <property type="match status" value="1"/>
</dbReference>
<dbReference type="Gene3D" id="3.30.450.40">
    <property type="match status" value="1"/>
</dbReference>
<dbReference type="Gene3D" id="1.10.10.10">
    <property type="entry name" value="Winged helix-like DNA-binding domain superfamily/Winged helix DNA-binding domain"/>
    <property type="match status" value="1"/>
</dbReference>
<dbReference type="HAMAP" id="MF_00621">
    <property type="entry name" value="HTH_type_CodY"/>
    <property type="match status" value="1"/>
</dbReference>
<dbReference type="InterPro" id="IPR014154">
    <property type="entry name" value="CodY"/>
</dbReference>
<dbReference type="InterPro" id="IPR029016">
    <property type="entry name" value="GAF-like_dom_sf"/>
</dbReference>
<dbReference type="InterPro" id="IPR013198">
    <property type="entry name" value="GTP_trans_reg_CodY_C"/>
</dbReference>
<dbReference type="InterPro" id="IPR010312">
    <property type="entry name" value="Transc_reg_CodY_N"/>
</dbReference>
<dbReference type="InterPro" id="IPR036388">
    <property type="entry name" value="WH-like_DNA-bd_sf"/>
</dbReference>
<dbReference type="InterPro" id="IPR036390">
    <property type="entry name" value="WH_DNA-bd_sf"/>
</dbReference>
<dbReference type="NCBIfam" id="TIGR02787">
    <property type="entry name" value="codY_Gpos"/>
    <property type="match status" value="1"/>
</dbReference>
<dbReference type="NCBIfam" id="NF003170">
    <property type="entry name" value="PRK04158.1"/>
    <property type="match status" value="1"/>
</dbReference>
<dbReference type="PANTHER" id="PTHR40062:SF1">
    <property type="entry name" value="GLOBAL TRANSCRIPTIONAL REGULATOR CODY"/>
    <property type="match status" value="1"/>
</dbReference>
<dbReference type="PANTHER" id="PTHR40062">
    <property type="entry name" value="GTP-SENSING TRANSCRIPTIONAL PLEIOTROPIC REPRESSOR CODY"/>
    <property type="match status" value="1"/>
</dbReference>
<dbReference type="Pfam" id="PF06018">
    <property type="entry name" value="CodY"/>
    <property type="match status" value="1"/>
</dbReference>
<dbReference type="Pfam" id="PF08222">
    <property type="entry name" value="HTH_CodY"/>
    <property type="match status" value="1"/>
</dbReference>
<dbReference type="PIRSF" id="PIRSF011572">
    <property type="entry name" value="GTP_sensing_CodY"/>
    <property type="match status" value="1"/>
</dbReference>
<dbReference type="SUPFAM" id="SSF46785">
    <property type="entry name" value="Winged helix' DNA-binding domain"/>
    <property type="match status" value="1"/>
</dbReference>